<reference key="1">
    <citation type="journal article" date="2011" name="Genome Biol.">
        <title>Comparative and functional genomics provide insights into the pathogenicity of dermatophytic fungi.</title>
        <authorList>
            <person name="Burmester A."/>
            <person name="Shelest E."/>
            <person name="Gloeckner G."/>
            <person name="Heddergott C."/>
            <person name="Schindler S."/>
            <person name="Staib P."/>
            <person name="Heidel A."/>
            <person name="Felder M."/>
            <person name="Petzold A."/>
            <person name="Szafranski K."/>
            <person name="Feuermann M."/>
            <person name="Pedruzzi I."/>
            <person name="Priebe S."/>
            <person name="Groth M."/>
            <person name="Winkler R."/>
            <person name="Li W."/>
            <person name="Kniemeyer O."/>
            <person name="Schroeckh V."/>
            <person name="Hertweck C."/>
            <person name="Hube B."/>
            <person name="White T.C."/>
            <person name="Platzer M."/>
            <person name="Guthke R."/>
            <person name="Heitman J."/>
            <person name="Woestemeyer J."/>
            <person name="Zipfel P.F."/>
            <person name="Monod M."/>
            <person name="Brakhage A.A."/>
        </authorList>
    </citation>
    <scope>NUCLEOTIDE SEQUENCE [LARGE SCALE GENOMIC DNA]</scope>
    <source>
        <strain>HKI 0517</strain>
    </source>
</reference>
<name>SUB11_TRIVH</name>
<sequence>MGLFKVIFTAVAALSAVDAAELLSSAKSKDIIPNSYLVVMKDSVSSAELDSHVSWVTDLHREGVAKRGAENLGGFKHSYKINGWHAYSGSFDSETLASILDNDKVDFVEHDRHVYISGFVTQKDAPSWGLGRVSHRMNGTRDYVYDESAGSGITFYGVDTGIDIHHPDFGGRAVWGINVVNDTKDNDRHGHGTHTAATAAGTKYGLAKKANVVAVKALNDYGAGLWSNIMKALEWCVNDAREKKILGKAVLNLSISGGKVVAANQAITNAAKAGIFVSVAAGNDNQDATNKSPASAENVCCAAATTIRDDKAKFSNYGSVVKLYAPGQGITSATPNNQTGVMSGTSMAAPHVGGVGATLMASKGIAPAAVCAELIKMASGPVLNPGANTTNKLLYNRSGK</sequence>
<organism>
    <name type="scientific">Trichophyton verrucosum (strain HKI 0517)</name>
    <dbReference type="NCBI Taxonomy" id="663202"/>
    <lineage>
        <taxon>Eukaryota</taxon>
        <taxon>Fungi</taxon>
        <taxon>Dikarya</taxon>
        <taxon>Ascomycota</taxon>
        <taxon>Pezizomycotina</taxon>
        <taxon>Eurotiomycetes</taxon>
        <taxon>Eurotiomycetidae</taxon>
        <taxon>Onygenales</taxon>
        <taxon>Arthrodermataceae</taxon>
        <taxon>Trichophyton</taxon>
    </lineage>
</organism>
<proteinExistence type="inferred from homology"/>
<evidence type="ECO:0000250" key="1"/>
<evidence type="ECO:0000255" key="2"/>
<evidence type="ECO:0000255" key="3">
    <source>
        <dbReference type="PROSITE-ProRule" id="PRU01240"/>
    </source>
</evidence>
<evidence type="ECO:0000305" key="4"/>
<accession>D4CZ60</accession>
<comment type="function">
    <text evidence="1">Secreted subtilisin-like serine protease with keratinolytic activity that contributes to pathogenicity.</text>
</comment>
<comment type="subcellular location">
    <subcellularLocation>
        <location evidence="1">Secreted</location>
    </subcellularLocation>
</comment>
<comment type="similarity">
    <text evidence="4">Belongs to the peptidase S8 family.</text>
</comment>
<feature type="signal peptide" evidence="2">
    <location>
        <begin position="1"/>
        <end position="19"/>
    </location>
</feature>
<feature type="propeptide" id="PRO_0000406404" evidence="1">
    <location>
        <begin position="20"/>
        <end position="117"/>
    </location>
</feature>
<feature type="chain" id="PRO_0000406405" description="Subtilisin-like protease 11">
    <location>
        <begin position="118"/>
        <end position="400"/>
    </location>
</feature>
<feature type="domain" description="Inhibitor I9" evidence="2">
    <location>
        <begin position="35"/>
        <end position="116"/>
    </location>
</feature>
<feature type="domain" description="Peptidase S8" evidence="3">
    <location>
        <begin position="127"/>
        <end position="400"/>
    </location>
</feature>
<feature type="active site" description="Charge relay system" evidence="3">
    <location>
        <position position="159"/>
    </location>
</feature>
<feature type="active site" description="Charge relay system" evidence="3">
    <location>
        <position position="191"/>
    </location>
</feature>
<feature type="active site" description="Charge relay system" evidence="3">
    <location>
        <position position="346"/>
    </location>
</feature>
<feature type="glycosylation site" description="N-linked (GlcNAc...) asparagine" evidence="2">
    <location>
        <position position="138"/>
    </location>
</feature>
<feature type="glycosylation site" description="N-linked (GlcNAc...) asparagine" evidence="2">
    <location>
        <position position="181"/>
    </location>
</feature>
<feature type="glycosylation site" description="N-linked (GlcNAc...) asparagine" evidence="2">
    <location>
        <position position="252"/>
    </location>
</feature>
<feature type="glycosylation site" description="N-linked (GlcNAc...) asparagine" evidence="2">
    <location>
        <position position="337"/>
    </location>
</feature>
<feature type="glycosylation site" description="N-linked (GlcNAc...) asparagine" evidence="2">
    <location>
        <position position="388"/>
    </location>
</feature>
<feature type="glycosylation site" description="N-linked (GlcNAc...) asparagine" evidence="2">
    <location>
        <position position="396"/>
    </location>
</feature>
<keyword id="KW-0325">Glycoprotein</keyword>
<keyword id="KW-0378">Hydrolase</keyword>
<keyword id="KW-0645">Protease</keyword>
<keyword id="KW-0964">Secreted</keyword>
<keyword id="KW-0720">Serine protease</keyword>
<keyword id="KW-0732">Signal</keyword>
<keyword id="KW-0843">Virulence</keyword>
<keyword id="KW-0865">Zymogen</keyword>
<gene>
    <name type="primary">SUB11</name>
    <name type="ORF">TRV_00097</name>
</gene>
<dbReference type="EC" id="3.4.21.-"/>
<dbReference type="EMBL" id="ACYE01000004">
    <property type="protein sequence ID" value="EFE45115.1"/>
    <property type="molecule type" value="Genomic_DNA"/>
</dbReference>
<dbReference type="RefSeq" id="XP_003025726.1">
    <property type="nucleotide sequence ID" value="XM_003025680.1"/>
</dbReference>
<dbReference type="SMR" id="D4CZ60"/>
<dbReference type="GlyCosmos" id="D4CZ60">
    <property type="glycosylation" value="6 sites, No reported glycans"/>
</dbReference>
<dbReference type="GeneID" id="9581969"/>
<dbReference type="KEGG" id="tve:TRV_00097"/>
<dbReference type="HOGENOM" id="CLU_011263_1_3_1"/>
<dbReference type="OrthoDB" id="5455at34384"/>
<dbReference type="Proteomes" id="UP000008383">
    <property type="component" value="Unassembled WGS sequence"/>
</dbReference>
<dbReference type="GO" id="GO:0005576">
    <property type="term" value="C:extracellular region"/>
    <property type="evidence" value="ECO:0007669"/>
    <property type="project" value="UniProtKB-SubCell"/>
</dbReference>
<dbReference type="GO" id="GO:0004252">
    <property type="term" value="F:serine-type endopeptidase activity"/>
    <property type="evidence" value="ECO:0007669"/>
    <property type="project" value="InterPro"/>
</dbReference>
<dbReference type="GO" id="GO:0006508">
    <property type="term" value="P:proteolysis"/>
    <property type="evidence" value="ECO:0007669"/>
    <property type="project" value="UniProtKB-KW"/>
</dbReference>
<dbReference type="CDD" id="cd04077">
    <property type="entry name" value="Peptidases_S8_PCSK9_ProteinaseK_like"/>
    <property type="match status" value="1"/>
</dbReference>
<dbReference type="FunFam" id="3.40.50.200:FF:000014">
    <property type="entry name" value="Proteinase K"/>
    <property type="match status" value="1"/>
</dbReference>
<dbReference type="Gene3D" id="3.30.70.80">
    <property type="entry name" value="Peptidase S8 propeptide/proteinase inhibitor I9"/>
    <property type="match status" value="1"/>
</dbReference>
<dbReference type="Gene3D" id="3.40.50.200">
    <property type="entry name" value="Peptidase S8/S53 domain"/>
    <property type="match status" value="1"/>
</dbReference>
<dbReference type="InterPro" id="IPR034193">
    <property type="entry name" value="PCSK9_ProteinaseK-like"/>
</dbReference>
<dbReference type="InterPro" id="IPR000209">
    <property type="entry name" value="Peptidase_S8/S53_dom"/>
</dbReference>
<dbReference type="InterPro" id="IPR036852">
    <property type="entry name" value="Peptidase_S8/S53_dom_sf"/>
</dbReference>
<dbReference type="InterPro" id="IPR050131">
    <property type="entry name" value="Peptidase_S8_subtilisin-like"/>
</dbReference>
<dbReference type="InterPro" id="IPR015500">
    <property type="entry name" value="Peptidase_S8_subtilisin-rel"/>
</dbReference>
<dbReference type="InterPro" id="IPR010259">
    <property type="entry name" value="S8pro/Inhibitor_I9"/>
</dbReference>
<dbReference type="InterPro" id="IPR037045">
    <property type="entry name" value="S8pro/Inhibitor_I9_sf"/>
</dbReference>
<dbReference type="PANTHER" id="PTHR43806:SF11">
    <property type="entry name" value="CEREVISIN-RELATED"/>
    <property type="match status" value="1"/>
</dbReference>
<dbReference type="PANTHER" id="PTHR43806">
    <property type="entry name" value="PEPTIDASE S8"/>
    <property type="match status" value="1"/>
</dbReference>
<dbReference type="Pfam" id="PF05922">
    <property type="entry name" value="Inhibitor_I9"/>
    <property type="match status" value="1"/>
</dbReference>
<dbReference type="Pfam" id="PF00082">
    <property type="entry name" value="Peptidase_S8"/>
    <property type="match status" value="1"/>
</dbReference>
<dbReference type="PRINTS" id="PR00723">
    <property type="entry name" value="SUBTILISIN"/>
</dbReference>
<dbReference type="SUPFAM" id="SSF54897">
    <property type="entry name" value="Protease propeptides/inhibitors"/>
    <property type="match status" value="1"/>
</dbReference>
<dbReference type="SUPFAM" id="SSF52743">
    <property type="entry name" value="Subtilisin-like"/>
    <property type="match status" value="1"/>
</dbReference>
<dbReference type="PROSITE" id="PS51892">
    <property type="entry name" value="SUBTILASE"/>
    <property type="match status" value="1"/>
</dbReference>
<protein>
    <recommendedName>
        <fullName>Subtilisin-like protease 11</fullName>
        <ecNumber>3.4.21.-</ecNumber>
    </recommendedName>
</protein>